<keyword id="KW-0131">Cell cycle</keyword>
<keyword id="KW-0132">Cell division</keyword>
<keyword id="KW-1015">Disulfide bond</keyword>
<keyword id="KW-0498">Mitosis</keyword>
<keyword id="KW-0507">mRNA processing</keyword>
<keyword id="KW-0508">mRNA splicing</keyword>
<keyword id="KW-0539">Nucleus</keyword>
<keyword id="KW-0597">Phosphoprotein</keyword>
<keyword id="KW-1185">Reference proteome</keyword>
<keyword id="KW-0747">Spliceosome</keyword>
<evidence type="ECO:0000250" key="1"/>
<evidence type="ECO:0000250" key="2">
    <source>
        <dbReference type="UniProtKB" id="P83876"/>
    </source>
</evidence>
<evidence type="ECO:0000305" key="3"/>
<reference key="1">
    <citation type="journal article" date="2005" name="Science">
        <title>The transcriptional landscape of the mammalian genome.</title>
        <authorList>
            <person name="Carninci P."/>
            <person name="Kasukawa T."/>
            <person name="Katayama S."/>
            <person name="Gough J."/>
            <person name="Frith M.C."/>
            <person name="Maeda N."/>
            <person name="Oyama R."/>
            <person name="Ravasi T."/>
            <person name="Lenhard B."/>
            <person name="Wells C."/>
            <person name="Kodzius R."/>
            <person name="Shimokawa K."/>
            <person name="Bajic V.B."/>
            <person name="Brenner S.E."/>
            <person name="Batalov S."/>
            <person name="Forrest A.R."/>
            <person name="Zavolan M."/>
            <person name="Davis M.J."/>
            <person name="Wilming L.G."/>
            <person name="Aidinis V."/>
            <person name="Allen J.E."/>
            <person name="Ambesi-Impiombato A."/>
            <person name="Apweiler R."/>
            <person name="Aturaliya R.N."/>
            <person name="Bailey T.L."/>
            <person name="Bansal M."/>
            <person name="Baxter L."/>
            <person name="Beisel K.W."/>
            <person name="Bersano T."/>
            <person name="Bono H."/>
            <person name="Chalk A.M."/>
            <person name="Chiu K.P."/>
            <person name="Choudhary V."/>
            <person name="Christoffels A."/>
            <person name="Clutterbuck D.R."/>
            <person name="Crowe M.L."/>
            <person name="Dalla E."/>
            <person name="Dalrymple B.P."/>
            <person name="de Bono B."/>
            <person name="Della Gatta G."/>
            <person name="di Bernardo D."/>
            <person name="Down T."/>
            <person name="Engstrom P."/>
            <person name="Fagiolini M."/>
            <person name="Faulkner G."/>
            <person name="Fletcher C.F."/>
            <person name="Fukushima T."/>
            <person name="Furuno M."/>
            <person name="Futaki S."/>
            <person name="Gariboldi M."/>
            <person name="Georgii-Hemming P."/>
            <person name="Gingeras T.R."/>
            <person name="Gojobori T."/>
            <person name="Green R.E."/>
            <person name="Gustincich S."/>
            <person name="Harbers M."/>
            <person name="Hayashi Y."/>
            <person name="Hensch T.K."/>
            <person name="Hirokawa N."/>
            <person name="Hill D."/>
            <person name="Huminiecki L."/>
            <person name="Iacono M."/>
            <person name="Ikeo K."/>
            <person name="Iwama A."/>
            <person name="Ishikawa T."/>
            <person name="Jakt M."/>
            <person name="Kanapin A."/>
            <person name="Katoh M."/>
            <person name="Kawasawa Y."/>
            <person name="Kelso J."/>
            <person name="Kitamura H."/>
            <person name="Kitano H."/>
            <person name="Kollias G."/>
            <person name="Krishnan S.P."/>
            <person name="Kruger A."/>
            <person name="Kummerfeld S.K."/>
            <person name="Kurochkin I.V."/>
            <person name="Lareau L.F."/>
            <person name="Lazarevic D."/>
            <person name="Lipovich L."/>
            <person name="Liu J."/>
            <person name="Liuni S."/>
            <person name="McWilliam S."/>
            <person name="Madan Babu M."/>
            <person name="Madera M."/>
            <person name="Marchionni L."/>
            <person name="Matsuda H."/>
            <person name="Matsuzawa S."/>
            <person name="Miki H."/>
            <person name="Mignone F."/>
            <person name="Miyake S."/>
            <person name="Morris K."/>
            <person name="Mottagui-Tabar S."/>
            <person name="Mulder N."/>
            <person name="Nakano N."/>
            <person name="Nakauchi H."/>
            <person name="Ng P."/>
            <person name="Nilsson R."/>
            <person name="Nishiguchi S."/>
            <person name="Nishikawa S."/>
            <person name="Nori F."/>
            <person name="Ohara O."/>
            <person name="Okazaki Y."/>
            <person name="Orlando V."/>
            <person name="Pang K.C."/>
            <person name="Pavan W.J."/>
            <person name="Pavesi G."/>
            <person name="Pesole G."/>
            <person name="Petrovsky N."/>
            <person name="Piazza S."/>
            <person name="Reed J."/>
            <person name="Reid J.F."/>
            <person name="Ring B.Z."/>
            <person name="Ringwald M."/>
            <person name="Rost B."/>
            <person name="Ruan Y."/>
            <person name="Salzberg S.L."/>
            <person name="Sandelin A."/>
            <person name="Schneider C."/>
            <person name="Schoenbach C."/>
            <person name="Sekiguchi K."/>
            <person name="Semple C.A."/>
            <person name="Seno S."/>
            <person name="Sessa L."/>
            <person name="Sheng Y."/>
            <person name="Shibata Y."/>
            <person name="Shimada H."/>
            <person name="Shimada K."/>
            <person name="Silva D."/>
            <person name="Sinclair B."/>
            <person name="Sperling S."/>
            <person name="Stupka E."/>
            <person name="Sugiura K."/>
            <person name="Sultana R."/>
            <person name="Takenaka Y."/>
            <person name="Taki K."/>
            <person name="Tammoja K."/>
            <person name="Tan S.L."/>
            <person name="Tang S."/>
            <person name="Taylor M.S."/>
            <person name="Tegner J."/>
            <person name="Teichmann S.A."/>
            <person name="Ueda H.R."/>
            <person name="van Nimwegen E."/>
            <person name="Verardo R."/>
            <person name="Wei C.L."/>
            <person name="Yagi K."/>
            <person name="Yamanishi H."/>
            <person name="Zabarovsky E."/>
            <person name="Zhu S."/>
            <person name="Zimmer A."/>
            <person name="Hide W."/>
            <person name="Bult C."/>
            <person name="Grimmond S.M."/>
            <person name="Teasdale R.D."/>
            <person name="Liu E.T."/>
            <person name="Brusic V."/>
            <person name="Quackenbush J."/>
            <person name="Wahlestedt C."/>
            <person name="Mattick J.S."/>
            <person name="Hume D.A."/>
            <person name="Kai C."/>
            <person name="Sasaki D."/>
            <person name="Tomaru Y."/>
            <person name="Fukuda S."/>
            <person name="Kanamori-Katayama M."/>
            <person name="Suzuki M."/>
            <person name="Aoki J."/>
            <person name="Arakawa T."/>
            <person name="Iida J."/>
            <person name="Imamura K."/>
            <person name="Itoh M."/>
            <person name="Kato T."/>
            <person name="Kawaji H."/>
            <person name="Kawagashira N."/>
            <person name="Kawashima T."/>
            <person name="Kojima M."/>
            <person name="Kondo S."/>
            <person name="Konno H."/>
            <person name="Nakano K."/>
            <person name="Ninomiya N."/>
            <person name="Nishio T."/>
            <person name="Okada M."/>
            <person name="Plessy C."/>
            <person name="Shibata K."/>
            <person name="Shiraki T."/>
            <person name="Suzuki S."/>
            <person name="Tagami M."/>
            <person name="Waki K."/>
            <person name="Watahiki A."/>
            <person name="Okamura-Oho Y."/>
            <person name="Suzuki H."/>
            <person name="Kawai J."/>
            <person name="Hayashizaki Y."/>
        </authorList>
    </citation>
    <scope>NUCLEOTIDE SEQUENCE [LARGE SCALE MRNA]</scope>
    <source>
        <strain>C57BL/6J</strain>
        <tissue>Mammary gland</tissue>
        <tissue>Pancreas</tissue>
    </source>
</reference>
<reference key="2">
    <citation type="journal article" date="2004" name="Genome Res.">
        <title>The status, quality, and expansion of the NIH full-length cDNA project: the Mammalian Gene Collection (MGC).</title>
        <authorList>
            <consortium name="The MGC Project Team"/>
        </authorList>
    </citation>
    <scope>NUCLEOTIDE SEQUENCE [LARGE SCALE MRNA]</scope>
    <source>
        <strain>Czech II</strain>
    </source>
</reference>
<reference key="3">
    <citation type="journal article" date="2010" name="Cell">
        <title>A tissue-specific atlas of mouse protein phosphorylation and expression.</title>
        <authorList>
            <person name="Huttlin E.L."/>
            <person name="Jedrychowski M.P."/>
            <person name="Elias J.E."/>
            <person name="Goswami T."/>
            <person name="Rad R."/>
            <person name="Beausoleil S.A."/>
            <person name="Villen J."/>
            <person name="Haas W."/>
            <person name="Sowa M.E."/>
            <person name="Gygi S.P."/>
        </authorList>
    </citation>
    <scope>IDENTIFICATION BY MASS SPECTROMETRY [LARGE SCALE ANALYSIS]</scope>
    <source>
        <tissue>Testis</tissue>
    </source>
</reference>
<organism>
    <name type="scientific">Mus musculus</name>
    <name type="common">Mouse</name>
    <dbReference type="NCBI Taxonomy" id="10090"/>
    <lineage>
        <taxon>Eukaryota</taxon>
        <taxon>Metazoa</taxon>
        <taxon>Chordata</taxon>
        <taxon>Craniata</taxon>
        <taxon>Vertebrata</taxon>
        <taxon>Euteleostomi</taxon>
        <taxon>Mammalia</taxon>
        <taxon>Eutheria</taxon>
        <taxon>Euarchontoglires</taxon>
        <taxon>Glires</taxon>
        <taxon>Rodentia</taxon>
        <taxon>Myomorpha</taxon>
        <taxon>Muroidea</taxon>
        <taxon>Muridae</taxon>
        <taxon>Murinae</taxon>
        <taxon>Mus</taxon>
        <taxon>Mus</taxon>
    </lineage>
</organism>
<name>TXN4A_MOUSE</name>
<comment type="function">
    <text evidence="2">Plays a role in pre-mRNA splicing as component of the U5 snRNP and U4/U6-U5 tri-snRNP complexes that are involved in spliceosome assembly, and as component of the precatalytic spliceosome (spliceosome B complex).</text>
</comment>
<comment type="subunit">
    <text evidence="2">Component of the precatalytic spliceosome (spliceosome B complex). Component of the U5 snRNP complex. Component of the U4/U6-U5 tri-snRNP complex. The U4/U6-U5 tri-snRNP complex is a building block of the precatalytic spliceosome (spliceosome B complex). The U4/U6-U5 tri-snRNP complex is composed of the U4, U6 and U5 snRNAs and at least PRPF3, PRPF4, PRPF6, PRPF8, PRPF31, SNRNP200, TXNL4A, SNRNP40, SNRPB, SNRPD1, SNRPD2, SNRPD3, SNRPE, SNRPF, SNRPG, DDX23, CD2BP2, PPIH, SNU13, EFTUD2, SART1 and USP39, plus LSM2, LSM3, LSM4, LSM5, LSM6, LSM7 and LSM8. Directly interacts with CD2BP2. Interacts with HNRPF, HNRPH2, NEDD9 and PQBP1. Interacts with ERBB4.</text>
</comment>
<comment type="subcellular location">
    <subcellularLocation>
        <location evidence="2">Nucleus</location>
    </subcellularLocation>
</comment>
<comment type="similarity">
    <text evidence="3">Belongs to the DIM1 family.</text>
</comment>
<gene>
    <name type="primary">Txnl4a</name>
    <name type="synonym">Dim1</name>
    <name type="synonym">Txnl4</name>
</gene>
<dbReference type="EMBL" id="AK004039">
    <property type="protein sequence ID" value="BAB23137.1"/>
    <property type="molecule type" value="mRNA"/>
</dbReference>
<dbReference type="EMBL" id="AK007331">
    <property type="protein sequence ID" value="BAB24966.1"/>
    <property type="molecule type" value="mRNA"/>
</dbReference>
<dbReference type="EMBL" id="AK148287">
    <property type="protein sequence ID" value="BAE28459.1"/>
    <property type="molecule type" value="mRNA"/>
</dbReference>
<dbReference type="EMBL" id="AK166497">
    <property type="protein sequence ID" value="BAE38809.1"/>
    <property type="molecule type" value="mRNA"/>
</dbReference>
<dbReference type="EMBL" id="BC031634">
    <property type="protein sequence ID" value="AAH31634.1"/>
    <property type="molecule type" value="mRNA"/>
</dbReference>
<dbReference type="CCDS" id="CCDS29365.1"/>
<dbReference type="RefSeq" id="NP_001371102.1">
    <property type="nucleotide sequence ID" value="NM_001384173.1"/>
</dbReference>
<dbReference type="RefSeq" id="NP_001371103.1">
    <property type="nucleotide sequence ID" value="NM_001384174.1"/>
</dbReference>
<dbReference type="RefSeq" id="NP_079575.1">
    <property type="nucleotide sequence ID" value="NM_025299.4"/>
</dbReference>
<dbReference type="RefSeq" id="XP_006526550.1">
    <property type="nucleotide sequence ID" value="XM_006526487.3"/>
</dbReference>
<dbReference type="SMR" id="P83877"/>
<dbReference type="BioGRID" id="205173">
    <property type="interactions" value="6"/>
</dbReference>
<dbReference type="FunCoup" id="P83877">
    <property type="interactions" value="3398"/>
</dbReference>
<dbReference type="STRING" id="10090.ENSMUSP00000115320"/>
<dbReference type="iPTMnet" id="P83877"/>
<dbReference type="PhosphoSitePlus" id="P83877"/>
<dbReference type="SwissPalm" id="P83877"/>
<dbReference type="jPOST" id="P83877"/>
<dbReference type="PaxDb" id="10090-ENSMUSP00000115320"/>
<dbReference type="PeptideAtlas" id="P83877"/>
<dbReference type="ProteomicsDB" id="298396"/>
<dbReference type="Pumba" id="P83877"/>
<dbReference type="Antibodypedia" id="23516">
    <property type="antibodies" value="76 antibodies from 20 providers"/>
</dbReference>
<dbReference type="DNASU" id="27366"/>
<dbReference type="Ensembl" id="ENSMUST00000145963.9">
    <property type="protein sequence ID" value="ENSMUSP00000115320.2"/>
    <property type="gene ID" value="ENSMUSG00000057130.13"/>
</dbReference>
<dbReference type="GeneID" id="27366"/>
<dbReference type="KEGG" id="mmu:27366"/>
<dbReference type="UCSC" id="uc008fso.1">
    <property type="organism name" value="mouse"/>
</dbReference>
<dbReference type="AGR" id="MGI:1351613"/>
<dbReference type="CTD" id="10907"/>
<dbReference type="MGI" id="MGI:1351613">
    <property type="gene designation" value="Txnl4a"/>
</dbReference>
<dbReference type="VEuPathDB" id="HostDB:ENSMUSG00000057130"/>
<dbReference type="eggNOG" id="KOG3414">
    <property type="taxonomic scope" value="Eukaryota"/>
</dbReference>
<dbReference type="GeneTree" id="ENSGT00390000010779"/>
<dbReference type="HOGENOM" id="CLU_117348_0_0_1"/>
<dbReference type="InParanoid" id="P83877"/>
<dbReference type="OMA" id="GMYELYD"/>
<dbReference type="OrthoDB" id="147752at2759"/>
<dbReference type="PhylomeDB" id="P83877"/>
<dbReference type="TreeFam" id="TF313562"/>
<dbReference type="Reactome" id="R-MMU-72163">
    <property type="pathway name" value="mRNA Splicing - Major Pathway"/>
</dbReference>
<dbReference type="Reactome" id="R-MMU-72165">
    <property type="pathway name" value="mRNA Splicing - Minor Pathway"/>
</dbReference>
<dbReference type="BioGRID-ORCS" id="27366">
    <property type="hits" value="29 hits in 75 CRISPR screens"/>
</dbReference>
<dbReference type="ChiTaRS" id="Txnl4a">
    <property type="organism name" value="mouse"/>
</dbReference>
<dbReference type="PRO" id="PR:P83877"/>
<dbReference type="Proteomes" id="UP000000589">
    <property type="component" value="Chromosome 18"/>
</dbReference>
<dbReference type="RNAct" id="P83877">
    <property type="molecule type" value="protein"/>
</dbReference>
<dbReference type="Bgee" id="ENSMUSG00000057130">
    <property type="expression patterns" value="Expressed in epiblast cell in embryo and 181 other cell types or tissues"/>
</dbReference>
<dbReference type="ExpressionAtlas" id="P83877">
    <property type="expression patterns" value="baseline and differential"/>
</dbReference>
<dbReference type="GO" id="GO:0005737">
    <property type="term" value="C:cytoplasm"/>
    <property type="evidence" value="ECO:0000250"/>
    <property type="project" value="MGI"/>
</dbReference>
<dbReference type="GO" id="GO:0005829">
    <property type="term" value="C:cytosol"/>
    <property type="evidence" value="ECO:0007669"/>
    <property type="project" value="Ensembl"/>
</dbReference>
<dbReference type="GO" id="GO:0005654">
    <property type="term" value="C:nucleoplasm"/>
    <property type="evidence" value="ECO:0007669"/>
    <property type="project" value="Ensembl"/>
</dbReference>
<dbReference type="GO" id="GO:0005634">
    <property type="term" value="C:nucleus"/>
    <property type="evidence" value="ECO:0000250"/>
    <property type="project" value="UniProtKB"/>
</dbReference>
<dbReference type="GO" id="GO:0071005">
    <property type="term" value="C:U2-type precatalytic spliceosome"/>
    <property type="evidence" value="ECO:0007669"/>
    <property type="project" value="Ensembl"/>
</dbReference>
<dbReference type="GO" id="GO:0046540">
    <property type="term" value="C:U4/U6 x U5 tri-snRNP complex"/>
    <property type="evidence" value="ECO:0000250"/>
    <property type="project" value="UniProtKB"/>
</dbReference>
<dbReference type="GO" id="GO:0005682">
    <property type="term" value="C:U5 snRNP"/>
    <property type="evidence" value="ECO:0000266"/>
    <property type="project" value="MGI"/>
</dbReference>
<dbReference type="GO" id="GO:0051301">
    <property type="term" value="P:cell division"/>
    <property type="evidence" value="ECO:0007669"/>
    <property type="project" value="UniProtKB-KW"/>
</dbReference>
<dbReference type="GO" id="GO:0000398">
    <property type="term" value="P:mRNA splicing, via spliceosome"/>
    <property type="evidence" value="ECO:0000250"/>
    <property type="project" value="UniProtKB"/>
</dbReference>
<dbReference type="CDD" id="cd02954">
    <property type="entry name" value="DIM1"/>
    <property type="match status" value="1"/>
</dbReference>
<dbReference type="FunFam" id="3.40.30.10:FF:000004">
    <property type="entry name" value="Spliceosomal protein DIB1"/>
    <property type="match status" value="1"/>
</dbReference>
<dbReference type="Gene3D" id="3.40.30.10">
    <property type="entry name" value="Glutaredoxin"/>
    <property type="match status" value="1"/>
</dbReference>
<dbReference type="InterPro" id="IPR004123">
    <property type="entry name" value="Dim1"/>
</dbReference>
<dbReference type="InterPro" id="IPR036249">
    <property type="entry name" value="Thioredoxin-like_sf"/>
</dbReference>
<dbReference type="PANTHER" id="PTHR12052:SF5">
    <property type="entry name" value="THIOREDOXIN-LIKE PROTEIN 4A"/>
    <property type="match status" value="1"/>
</dbReference>
<dbReference type="PANTHER" id="PTHR12052">
    <property type="entry name" value="THIOREDOXIN-LIKE PROTEN 4A, 4B"/>
    <property type="match status" value="1"/>
</dbReference>
<dbReference type="Pfam" id="PF02966">
    <property type="entry name" value="DIM1"/>
    <property type="match status" value="1"/>
</dbReference>
<dbReference type="PIRSF" id="PIRSF017199">
    <property type="entry name" value="mRNA_splic_U5"/>
    <property type="match status" value="1"/>
</dbReference>
<dbReference type="SMART" id="SM01410">
    <property type="entry name" value="DIM1"/>
    <property type="match status" value="1"/>
</dbReference>
<dbReference type="SUPFAM" id="SSF52833">
    <property type="entry name" value="Thioredoxin-like"/>
    <property type="match status" value="1"/>
</dbReference>
<feature type="chain" id="PRO_0000218288" description="Thioredoxin-like protein 4A">
    <location>
        <begin position="1"/>
        <end position="142"/>
    </location>
</feature>
<feature type="modified residue" description="Phosphoserine" evidence="2">
    <location>
        <position position="132"/>
    </location>
</feature>
<feature type="disulfide bond" evidence="1">
    <location>
        <begin position="38"/>
        <end position="79"/>
    </location>
</feature>
<accession>P83877</accession>
<accession>O14834</accession>
<accession>Q3TLI3</accession>
<proteinExistence type="evidence at protein level"/>
<protein>
    <recommendedName>
        <fullName>Thioredoxin-like protein 4A</fullName>
    </recommendedName>
    <alternativeName>
        <fullName>DIM1 protein homolog</fullName>
    </alternativeName>
    <alternativeName>
        <fullName>Spliceosomal U5 snRNP-specific 15 kDa protein</fullName>
    </alternativeName>
    <alternativeName>
        <fullName>Thioredoxin-like U5 snRNP protein U5-15kD</fullName>
    </alternativeName>
</protein>
<sequence length="142" mass="16786">MSYMLPHLHNGWQVDQAILSEEDRVVVIRFGHDWDPTCMKMDEVLYSIAEKVKNFAVIYLVDITEVPDFNKMYELYDPCTVMFFFRNKHIMIDLGTGNNNKINWAMEDKQEMVDIIETVYRGARKGRGLVVSPKDYSTKYRY</sequence>